<evidence type="ECO:0000250" key="1"/>
<evidence type="ECO:0000255" key="2">
    <source>
        <dbReference type="PROSITE-ProRule" id="PRU00221"/>
    </source>
</evidence>
<evidence type="ECO:0000256" key="3">
    <source>
        <dbReference type="SAM" id="MobiDB-lite"/>
    </source>
</evidence>
<evidence type="ECO:0000305" key="4"/>
<comment type="function">
    <text evidence="1">Component of the coat protein complex II (COPII) which promotes the formation of transport vesicles from the endoplasmic reticulum (ER). The coat has two main functions, the physical deformation of the endoplasmic reticulum membrane into vesicles and the selection of cargo molecules (By similarity).</text>
</comment>
<comment type="subunit">
    <text evidence="1">The COPII coat is composed of at least 5 proteins: the SEC23/24 complex, the SEC13/31 complex, and the protein SAR1. SEC13 and SEC31 make a 2:2 tetramer that forms the edge element of the COPII outer coat. The tetramer self-assembles in multiple copies to form the complete polyhedral cage. Interacts (via WD 8) with SEC13 (By similarity).</text>
</comment>
<comment type="subcellular location">
    <subcellularLocation>
        <location evidence="1">Cytoplasmic vesicle</location>
        <location evidence="1">COPII-coated vesicle membrane</location>
        <topology evidence="1">Peripheral membrane protein</topology>
        <orientation evidence="1">Cytoplasmic side</orientation>
    </subcellularLocation>
    <subcellularLocation>
        <location evidence="1">Endoplasmic reticulum membrane</location>
        <topology evidence="1">Peripheral membrane protein</topology>
        <orientation evidence="1">Cytoplasmic side</orientation>
    </subcellularLocation>
</comment>
<comment type="similarity">
    <text evidence="4">Belongs to the WD repeat SEC31 family.</text>
</comment>
<name>SEC31_KLULA</name>
<organism>
    <name type="scientific">Kluyveromyces lactis (strain ATCC 8585 / CBS 2359 / DSM 70799 / NBRC 1267 / NRRL Y-1140 / WM37)</name>
    <name type="common">Yeast</name>
    <name type="synonym">Candida sphaerica</name>
    <dbReference type="NCBI Taxonomy" id="284590"/>
    <lineage>
        <taxon>Eukaryota</taxon>
        <taxon>Fungi</taxon>
        <taxon>Dikarya</taxon>
        <taxon>Ascomycota</taxon>
        <taxon>Saccharomycotina</taxon>
        <taxon>Saccharomycetes</taxon>
        <taxon>Saccharomycetales</taxon>
        <taxon>Saccharomycetaceae</taxon>
        <taxon>Kluyveromyces</taxon>
    </lineage>
</organism>
<protein>
    <recommendedName>
        <fullName>Protein transport protein SEC31</fullName>
    </recommendedName>
</protein>
<proteinExistence type="inferred from homology"/>
<feature type="chain" id="PRO_0000295438" description="Protein transport protein SEC31">
    <location>
        <begin position="1"/>
        <end position="1231"/>
    </location>
</feature>
<feature type="repeat" description="WD 1">
    <location>
        <begin position="6"/>
        <end position="46"/>
    </location>
</feature>
<feature type="repeat" description="WD 2">
    <location>
        <begin position="60"/>
        <end position="99"/>
    </location>
</feature>
<feature type="repeat" description="WD 3">
    <location>
        <begin position="102"/>
        <end position="142"/>
    </location>
</feature>
<feature type="repeat" description="WD 4">
    <location>
        <begin position="152"/>
        <end position="192"/>
    </location>
</feature>
<feature type="repeat" description="WD 5">
    <location>
        <begin position="201"/>
        <end position="244"/>
    </location>
</feature>
<feature type="repeat" description="WD 6">
    <location>
        <begin position="249"/>
        <end position="289"/>
    </location>
</feature>
<feature type="repeat" description="WD 7">
    <location>
        <begin position="292"/>
        <end position="332"/>
    </location>
</feature>
<feature type="repeat" description="WD 8; interaction with SEC13" evidence="2">
    <location>
        <begin position="379"/>
        <end position="399"/>
    </location>
</feature>
<feature type="region of interest" description="Disordered" evidence="3">
    <location>
        <begin position="725"/>
        <end position="802"/>
    </location>
</feature>
<feature type="region of interest" description="Disordered" evidence="3">
    <location>
        <begin position="941"/>
        <end position="1012"/>
    </location>
</feature>
<feature type="compositionally biased region" description="Polar residues" evidence="3">
    <location>
        <begin position="737"/>
        <end position="767"/>
    </location>
</feature>
<feature type="compositionally biased region" description="Pro residues" evidence="3">
    <location>
        <begin position="779"/>
        <end position="791"/>
    </location>
</feature>
<feature type="compositionally biased region" description="Polar residues" evidence="3">
    <location>
        <begin position="976"/>
        <end position="998"/>
    </location>
</feature>
<accession>Q6CL75</accession>
<dbReference type="EMBL" id="CR382126">
    <property type="protein sequence ID" value="CAG98022.1"/>
    <property type="molecule type" value="Genomic_DNA"/>
</dbReference>
<dbReference type="RefSeq" id="XP_455314.1">
    <property type="nucleotide sequence ID" value="XM_455314.1"/>
</dbReference>
<dbReference type="SMR" id="Q6CL75"/>
<dbReference type="FunCoup" id="Q6CL75">
    <property type="interactions" value="765"/>
</dbReference>
<dbReference type="STRING" id="284590.Q6CL75"/>
<dbReference type="PaxDb" id="284590-Q6CL75"/>
<dbReference type="KEGG" id="kla:KLLA0_F05159g"/>
<dbReference type="eggNOG" id="KOG0307">
    <property type="taxonomic scope" value="Eukaryota"/>
</dbReference>
<dbReference type="HOGENOM" id="CLU_003033_2_0_1"/>
<dbReference type="InParanoid" id="Q6CL75"/>
<dbReference type="OMA" id="AQWAFGG"/>
<dbReference type="Proteomes" id="UP000000598">
    <property type="component" value="Chromosome F"/>
</dbReference>
<dbReference type="GO" id="GO:0030127">
    <property type="term" value="C:COPII vesicle coat"/>
    <property type="evidence" value="ECO:0007669"/>
    <property type="project" value="TreeGrafter"/>
</dbReference>
<dbReference type="GO" id="GO:0070971">
    <property type="term" value="C:endoplasmic reticulum exit site"/>
    <property type="evidence" value="ECO:0007669"/>
    <property type="project" value="TreeGrafter"/>
</dbReference>
<dbReference type="GO" id="GO:0005789">
    <property type="term" value="C:endoplasmic reticulum membrane"/>
    <property type="evidence" value="ECO:0007669"/>
    <property type="project" value="UniProtKB-SubCell"/>
</dbReference>
<dbReference type="GO" id="GO:0005198">
    <property type="term" value="F:structural molecule activity"/>
    <property type="evidence" value="ECO:0007669"/>
    <property type="project" value="TreeGrafter"/>
</dbReference>
<dbReference type="GO" id="GO:0090110">
    <property type="term" value="P:COPII-coated vesicle cargo loading"/>
    <property type="evidence" value="ECO:0007669"/>
    <property type="project" value="TreeGrafter"/>
</dbReference>
<dbReference type="GO" id="GO:0007029">
    <property type="term" value="P:endoplasmic reticulum organization"/>
    <property type="evidence" value="ECO:0007669"/>
    <property type="project" value="TreeGrafter"/>
</dbReference>
<dbReference type="GO" id="GO:0015031">
    <property type="term" value="P:protein transport"/>
    <property type="evidence" value="ECO:0007669"/>
    <property type="project" value="UniProtKB-KW"/>
</dbReference>
<dbReference type="Gene3D" id="1.25.40.980">
    <property type="match status" value="1"/>
</dbReference>
<dbReference type="Gene3D" id="2.20.25.400">
    <property type="match status" value="1"/>
</dbReference>
<dbReference type="Gene3D" id="6.10.140.1600">
    <property type="match status" value="1"/>
</dbReference>
<dbReference type="Gene3D" id="1.20.940.10">
    <property type="entry name" value="Functional domain of the splicing factor Prp18"/>
    <property type="match status" value="1"/>
</dbReference>
<dbReference type="Gene3D" id="2.130.10.10">
    <property type="entry name" value="YVTN repeat-like/Quinoprotein amine dehydrogenase"/>
    <property type="match status" value="1"/>
</dbReference>
<dbReference type="InterPro" id="IPR021614">
    <property type="entry name" value="Sec31"/>
</dbReference>
<dbReference type="InterPro" id="IPR040251">
    <property type="entry name" value="SEC31-like"/>
</dbReference>
<dbReference type="InterPro" id="IPR009917">
    <property type="entry name" value="SRA1/Sec31"/>
</dbReference>
<dbReference type="InterPro" id="IPR015943">
    <property type="entry name" value="WD40/YVTN_repeat-like_dom_sf"/>
</dbReference>
<dbReference type="InterPro" id="IPR036322">
    <property type="entry name" value="WD40_repeat_dom_sf"/>
</dbReference>
<dbReference type="InterPro" id="IPR001680">
    <property type="entry name" value="WD40_rpt"/>
</dbReference>
<dbReference type="PANTHER" id="PTHR13923">
    <property type="entry name" value="SEC31-RELATED PROTEIN"/>
    <property type="match status" value="1"/>
</dbReference>
<dbReference type="PANTHER" id="PTHR13923:SF11">
    <property type="entry name" value="SECRETORY 31, ISOFORM D"/>
    <property type="match status" value="1"/>
</dbReference>
<dbReference type="Pfam" id="PF11549">
    <property type="entry name" value="Sec31"/>
    <property type="match status" value="1"/>
</dbReference>
<dbReference type="Pfam" id="PF07304">
    <property type="entry name" value="SRA1"/>
    <property type="match status" value="1"/>
</dbReference>
<dbReference type="Pfam" id="PF00400">
    <property type="entry name" value="WD40"/>
    <property type="match status" value="2"/>
</dbReference>
<dbReference type="SMART" id="SM00320">
    <property type="entry name" value="WD40"/>
    <property type="match status" value="6"/>
</dbReference>
<dbReference type="SUPFAM" id="SSF47938">
    <property type="entry name" value="Functional domain of the splicing factor Prp18"/>
    <property type="match status" value="1"/>
</dbReference>
<dbReference type="SUPFAM" id="SSF50978">
    <property type="entry name" value="WD40 repeat-like"/>
    <property type="match status" value="1"/>
</dbReference>
<dbReference type="PROSITE" id="PS50082">
    <property type="entry name" value="WD_REPEATS_2"/>
    <property type="match status" value="2"/>
</dbReference>
<dbReference type="PROSITE" id="PS50294">
    <property type="entry name" value="WD_REPEATS_REGION"/>
    <property type="match status" value="1"/>
</dbReference>
<reference key="1">
    <citation type="journal article" date="2004" name="Nature">
        <title>Genome evolution in yeasts.</title>
        <authorList>
            <person name="Dujon B."/>
            <person name="Sherman D."/>
            <person name="Fischer G."/>
            <person name="Durrens P."/>
            <person name="Casaregola S."/>
            <person name="Lafontaine I."/>
            <person name="de Montigny J."/>
            <person name="Marck C."/>
            <person name="Neuveglise C."/>
            <person name="Talla E."/>
            <person name="Goffard N."/>
            <person name="Frangeul L."/>
            <person name="Aigle M."/>
            <person name="Anthouard V."/>
            <person name="Babour A."/>
            <person name="Barbe V."/>
            <person name="Barnay S."/>
            <person name="Blanchin S."/>
            <person name="Beckerich J.-M."/>
            <person name="Beyne E."/>
            <person name="Bleykasten C."/>
            <person name="Boisrame A."/>
            <person name="Boyer J."/>
            <person name="Cattolico L."/>
            <person name="Confanioleri F."/>
            <person name="de Daruvar A."/>
            <person name="Despons L."/>
            <person name="Fabre E."/>
            <person name="Fairhead C."/>
            <person name="Ferry-Dumazet H."/>
            <person name="Groppi A."/>
            <person name="Hantraye F."/>
            <person name="Hennequin C."/>
            <person name="Jauniaux N."/>
            <person name="Joyet P."/>
            <person name="Kachouri R."/>
            <person name="Kerrest A."/>
            <person name="Koszul R."/>
            <person name="Lemaire M."/>
            <person name="Lesur I."/>
            <person name="Ma L."/>
            <person name="Muller H."/>
            <person name="Nicaud J.-M."/>
            <person name="Nikolski M."/>
            <person name="Oztas S."/>
            <person name="Ozier-Kalogeropoulos O."/>
            <person name="Pellenz S."/>
            <person name="Potier S."/>
            <person name="Richard G.-F."/>
            <person name="Straub M.-L."/>
            <person name="Suleau A."/>
            <person name="Swennen D."/>
            <person name="Tekaia F."/>
            <person name="Wesolowski-Louvel M."/>
            <person name="Westhof E."/>
            <person name="Wirth B."/>
            <person name="Zeniou-Meyer M."/>
            <person name="Zivanovic Y."/>
            <person name="Bolotin-Fukuhara M."/>
            <person name="Thierry A."/>
            <person name="Bouchier C."/>
            <person name="Caudron B."/>
            <person name="Scarpelli C."/>
            <person name="Gaillardin C."/>
            <person name="Weissenbach J."/>
            <person name="Wincker P."/>
            <person name="Souciet J.-L."/>
        </authorList>
    </citation>
    <scope>NUCLEOTIDE SEQUENCE [LARGE SCALE GENOMIC DNA]</scope>
    <source>
        <strain>ATCC 8585 / CBS 2359 / DSM 70799 / NBRC 1267 / NRRL Y-1140 / WM37</strain>
    </source>
</reference>
<gene>
    <name type="primary">SEC31</name>
    <name type="ordered locus">KLLA0F05159g</name>
</gene>
<keyword id="KW-0968">Cytoplasmic vesicle</keyword>
<keyword id="KW-0256">Endoplasmic reticulum</keyword>
<keyword id="KW-0931">ER-Golgi transport</keyword>
<keyword id="KW-0472">Membrane</keyword>
<keyword id="KW-0653">Protein transport</keyword>
<keyword id="KW-1185">Reference proteome</keyword>
<keyword id="KW-0677">Repeat</keyword>
<keyword id="KW-0813">Transport</keyword>
<keyword id="KW-0853">WD repeat</keyword>
<sequence length="1231" mass="133054">MVKLAEYPRTATFSWSHDRVPVLATGPASGAIDADFSSTSTLELWSLLSFDGSKPSGSVVADGKFNDLDWSGDDKIIAGALENGVVEFFDPKALKSVAKIHKHQGPVKTLKFNAKQNNVLVSGGTQGEIFVWDSNKIGSSDYSPFSAGISNTPIDEVSSLSWNQSLAHVFASASSSGYASVWDLKAKKQVLHLNHSSSTTGIKVPLTVVDWHPTSSTIIATASSSDTEPLVLTWDLRNAHVPLKVLSQGHSKGVLSLDWCKQDENLLLSSGRDNTSVLWNPQEGSILTQFAPRGNWVFKSKFAPEAPDLFASASFDSKIVVQTLQNLSNTLDAQANESKQHASEDEFWNNVTSNSVDDKPNTVKIQAPKWYGNKSPAAQWAFGGKLVRISDDGKGVSVVKPCISGLEKNQLFDESLKSKDFVKLINKRLSQKINATNEDDWNLLENLSMDGTALYLKDALSLDDAKEDIIKKSEEDGADFFNQLNDKFVPEGAFKLDFSESMKPLTNFLIKGDLKSALNQALEKDLLLEALVIAITSNDALLADKAKNAYFSKHSEQSGLARTLFSVAQRDVEDIVTNIDVSQWKDAVQFIFNYTKEDISKKNSLLVKLGDRLLHEGNRKDAILLYLSGQSLESIASIWLKEFPELENQLTSQKDTLYEAHLECLTEFVERFTVLSDYLDKGTVKLTNQTLISKFLEFVNVTAANGDFELSLRFLETLPDDNEEVKSEKQRVLIASGKTSTTRSTERTANSTLQSRQGRYGSTSVPTANGAPRLSNSGIPPPNPLAAPHQPPASTAPNVVPRKPSFVPQTTSAIPTPNPYAPAAVNQQIPLSVVGSRPSYTPPVNPYAQTATSIPPNPYAPLPVAAPVPLGSPVAPPPISGASGYSGQTPHLHDKPIDGWNDLPSVSKEKPTRAKAVNTAPIGMSTPSYGTPDLAAVPLSRASTNSTLPPPPPNVRRTPKLTSPPEVASPPLPLKKTNSYAPTVSAVQSSQMPQQISNPLMPPASPNPATNGRSFVPPVNPYSPAPSAVTPTGIVPPKALVAAIPSPVPAPKAAAVPPPRKMNRKSTAVGDASAASNLLSSIQTKPTPPIHSPAMVDPVAVQYDQSAVSPTNVEIAAEQGAGITESDRPIVEFLTAELQRVTPLIPQEYTKQLKDCDKRIKILIKHLEHHDLLTQPTIDKLHQIVAFWKEGNYSEAMTIHQDLSANHSSEAGNWLTGIKRLMNIAEATSSQ</sequence>